<feature type="chain" id="PRO_0000133020" description="Protein AC78">
    <location>
        <begin position="1"/>
        <end position="109"/>
    </location>
</feature>
<feature type="transmembrane region" description="Helical" evidence="1">
    <location>
        <begin position="61"/>
        <end position="81"/>
    </location>
</feature>
<feature type="sequence conflict" description="In Ref. 2; CAA50541." evidence="4" ref="2">
    <original>V</original>
    <variation>G</variation>
    <location>
        <position position="49"/>
    </location>
</feature>
<accession>Q06693</accession>
<dbReference type="EMBL" id="L22858">
    <property type="protein sequence ID" value="AAA66708.1"/>
    <property type="molecule type" value="Genomic_DNA"/>
</dbReference>
<dbReference type="EMBL" id="X71415">
    <property type="protein sequence ID" value="CAA50541.1"/>
    <property type="molecule type" value="Genomic_DNA"/>
</dbReference>
<dbReference type="PIR" id="G72859">
    <property type="entry name" value="G72859"/>
</dbReference>
<dbReference type="PIR" id="S36693">
    <property type="entry name" value="S36693"/>
</dbReference>
<dbReference type="SMR" id="Q06693"/>
<dbReference type="KEGG" id="vg:1403911"/>
<dbReference type="OrthoDB" id="22950at10239"/>
<dbReference type="Proteomes" id="UP000008292">
    <property type="component" value="Segment"/>
</dbReference>
<dbReference type="GO" id="GO:0033644">
    <property type="term" value="C:host cell membrane"/>
    <property type="evidence" value="ECO:0007669"/>
    <property type="project" value="UniProtKB-SubCell"/>
</dbReference>
<dbReference type="GO" id="GO:0016020">
    <property type="term" value="C:membrane"/>
    <property type="evidence" value="ECO:0007669"/>
    <property type="project" value="UniProtKB-KW"/>
</dbReference>
<dbReference type="GO" id="GO:0044423">
    <property type="term" value="C:virion component"/>
    <property type="evidence" value="ECO:0007669"/>
    <property type="project" value="UniProtKB-KW"/>
</dbReference>
<dbReference type="InterPro" id="IPR009261">
    <property type="entry name" value="AcMNPV_AC78"/>
</dbReference>
<dbReference type="Pfam" id="PF06024">
    <property type="entry name" value="Orf78"/>
    <property type="match status" value="1"/>
</dbReference>
<keyword id="KW-1043">Host membrane</keyword>
<keyword id="KW-0472">Membrane</keyword>
<keyword id="KW-1185">Reference proteome</keyword>
<keyword id="KW-0812">Transmembrane</keyword>
<keyword id="KW-1133">Transmembrane helix</keyword>
<keyword id="KW-0946">Virion</keyword>
<organism>
    <name type="scientific">Autographa californica nuclear polyhedrosis virus</name>
    <name type="common">AcMNPV</name>
    <dbReference type="NCBI Taxonomy" id="46015"/>
    <lineage>
        <taxon>Viruses</taxon>
        <taxon>Viruses incertae sedis</taxon>
        <taxon>Naldaviricetes</taxon>
        <taxon>Lefavirales</taxon>
        <taxon>Baculoviridae</taxon>
        <taxon>Alphabaculovirus</taxon>
        <taxon>Alphabaculovirus aucalifornicae</taxon>
    </lineage>
</organism>
<reference key="1">
    <citation type="journal article" date="1994" name="Virology">
        <title>The complete DNA sequence of Autographa californica nuclear polyhedrosis virus.</title>
        <authorList>
            <person name="Ayres M.D."/>
            <person name="Howard S.C."/>
            <person name="Kuzio J."/>
            <person name="Lopez-Ferber M."/>
            <person name="Possee R.D."/>
        </authorList>
    </citation>
    <scope>NUCLEOTIDE SEQUENCE [LARGE SCALE GENOMIC DNA]</scope>
    <source>
        <strain>C6</strain>
    </source>
</reference>
<reference key="2">
    <citation type="journal article" date="1994" name="J. Gen. Virol.">
        <title>Nucleotide sequence and genetic organization of a 7.3 kb region (map unit 47 to 52.5) of Autographa californica nuclear polyhedrosis virus fragment EcoRI-C.</title>
        <authorList>
            <person name="Kool M."/>
            <person name="Broer R."/>
            <person name="Zuidema D."/>
            <person name="Goldbach R.W."/>
            <person name="Vlak J.M."/>
        </authorList>
    </citation>
    <scope>NUCLEOTIDE SEQUENCE [GENOMIC DNA]</scope>
    <source>
        <strain>E2</strain>
    </source>
</reference>
<reference key="3">
    <citation type="journal article" date="2013" name="J. Virol.">
        <title>The Autographa californica multiple nucleopolyhedrovirus ORF78 is essential for budded virus production and general occlusion body formation.</title>
        <authorList>
            <person name="Tao X.Y."/>
            <person name="Choi J.Y."/>
            <person name="Kim W.J."/>
            <person name="Lee J.H."/>
            <person name="Liu Q."/>
            <person name="Kim S.E."/>
            <person name="An S.B."/>
            <person name="Lee S.H."/>
            <person name="Woo S.D."/>
            <person name="Jin B.R."/>
            <person name="Je Y.H."/>
        </authorList>
    </citation>
    <scope>FUNCTION</scope>
    <scope>SUBCELLULAR LOCATION</scope>
</reference>
<reference key="4">
    <citation type="journal article" date="2014" name="Virus Res.">
        <title>Disruption of the baculovirus core gene ac78 results in decreased production of multiple nucleocapsid-enveloped occlusion-derived virions and the failure of primary infection in vivo.</title>
        <authorList>
            <person name="Li S.N."/>
            <person name="Wang J.Y."/>
            <person name="Yuan M.J."/>
            <person name="Yang K."/>
        </authorList>
    </citation>
    <scope>FUNCTION</scope>
    <scope>SUBCELLULAR LOCATION</scope>
</reference>
<organismHost>
    <name type="scientific">Lepidoptera</name>
    <name type="common">butterflies and moths</name>
    <dbReference type="NCBI Taxonomy" id="7088"/>
</organismHost>
<evidence type="ECO:0000255" key="1"/>
<evidence type="ECO:0000269" key="2">
    <source>
    </source>
</evidence>
<evidence type="ECO:0000269" key="3">
    <source>
    </source>
</evidence>
<evidence type="ECO:0000305" key="4"/>
<gene>
    <name type="primary">AC78</name>
    <name type="ORF">ORF78</name>
</gene>
<comment type="function">
    <text evidence="2 3">Plays an essential role in budded virus production and occlusion body formation.</text>
</comment>
<comment type="subcellular location">
    <subcellularLocation>
        <location evidence="1">Host membrane</location>
        <topology evidence="1">Single-pass membrane protein</topology>
    </subcellularLocation>
    <subcellularLocation>
        <location evidence="2">Virion</location>
    </subcellularLocation>
    <text evidence="2">Envelope structural protein associated with both budded viruses (BV) and occlusion-derived viruses (ODV).</text>
</comment>
<protein>
    <recommendedName>
        <fullName>Protein AC78</fullName>
    </recommendedName>
</protein>
<sequence>MNLDVPYYRLGNHEKVEYIPLKLALNDDTASEPQQFSEPVHKMPINDMVGYDNTTSNVSAGIIILISVVAFIALFLLLYVIYYFVILREQQQYSDSIDTDSPFVFNKFD</sequence>
<proteinExistence type="inferred from homology"/>
<name>AC78_NPVAC</name>